<organism>
    <name type="scientific">Levilactobacillus brevis</name>
    <name type="common">Lactobacillus brevis</name>
    <dbReference type="NCBI Taxonomy" id="1580"/>
    <lineage>
        <taxon>Bacteria</taxon>
        <taxon>Bacillati</taxon>
        <taxon>Bacillota</taxon>
        <taxon>Bacilli</taxon>
        <taxon>Lactobacillales</taxon>
        <taxon>Lactobacillaceae</taxon>
        <taxon>Levilactobacillus</taxon>
    </lineage>
</organism>
<feature type="chain" id="PRO_0000095478" description="Glutamate racemase">
    <location>
        <begin position="1"/>
        <end position="276"/>
    </location>
</feature>
<feature type="active site" description="Proton donor/acceptor" evidence="1">
    <location>
        <position position="74"/>
    </location>
</feature>
<feature type="active site" description="Proton donor/acceptor" evidence="1">
    <location>
        <position position="185"/>
    </location>
</feature>
<feature type="binding site" evidence="1">
    <location>
        <begin position="10"/>
        <end position="11"/>
    </location>
    <ligand>
        <name>substrate</name>
    </ligand>
</feature>
<feature type="binding site" evidence="1">
    <location>
        <begin position="42"/>
        <end position="43"/>
    </location>
    <ligand>
        <name>substrate</name>
    </ligand>
</feature>
<feature type="binding site" evidence="1">
    <location>
        <begin position="75"/>
        <end position="76"/>
    </location>
    <ligand>
        <name>substrate</name>
    </ligand>
</feature>
<feature type="binding site" evidence="1">
    <location>
        <begin position="186"/>
        <end position="187"/>
    </location>
    <ligand>
        <name>substrate</name>
    </ligand>
</feature>
<name>MURI_LEVBR</name>
<keyword id="KW-0133">Cell shape</keyword>
<keyword id="KW-0961">Cell wall biogenesis/degradation</keyword>
<keyword id="KW-0413">Isomerase</keyword>
<keyword id="KW-0573">Peptidoglycan synthesis</keyword>
<reference key="1">
    <citation type="journal article" date="1995" name="Biosci. Biotechnol. Biochem.">
        <title>Cloning, purification, and properties of a cofactor-independent glutamate racemase from Lactobacillus brevis ATCC 8287.</title>
        <authorList>
            <person name="Yagasaki M."/>
            <person name="Iwata K."/>
            <person name="Ishino S."/>
            <person name="Azuma M."/>
            <person name="Ozaki A."/>
        </authorList>
    </citation>
    <scope>NUCLEOTIDE SEQUENCE [GENOMIC DNA]</scope>
    <source>
        <strain>ATCC 8287 / DSM 20556 / BCRC 10361 / JCM 1559 / KCTC 3102 / NBRC 3345 / NCIMB 8038 / NCTC 13386 / 269Y</strain>
    </source>
</reference>
<comment type="function">
    <text evidence="1">Provides the (R)-glutamate required for cell wall biosynthesis.</text>
</comment>
<comment type="catalytic activity">
    <reaction evidence="1">
        <text>L-glutamate = D-glutamate</text>
        <dbReference type="Rhea" id="RHEA:12813"/>
        <dbReference type="ChEBI" id="CHEBI:29985"/>
        <dbReference type="ChEBI" id="CHEBI:29986"/>
        <dbReference type="EC" id="5.1.1.3"/>
    </reaction>
</comment>
<comment type="pathway">
    <text evidence="1">Cell wall biogenesis; peptidoglycan biosynthesis.</text>
</comment>
<comment type="similarity">
    <text evidence="1">Belongs to the aspartate/glutamate racemases family.</text>
</comment>
<dbReference type="EC" id="5.1.1.3" evidence="1"/>
<dbReference type="EMBL" id="D29627">
    <property type="protein sequence ID" value="BAA06106.1"/>
    <property type="molecule type" value="Genomic_DNA"/>
</dbReference>
<dbReference type="PIR" id="JC4005">
    <property type="entry name" value="JC4005"/>
</dbReference>
<dbReference type="RefSeq" id="WP_097545863.1">
    <property type="nucleotide sequence ID" value="NZ_BEWS01000001.1"/>
</dbReference>
<dbReference type="SMR" id="P48797"/>
<dbReference type="UniPathway" id="UPA00219"/>
<dbReference type="GO" id="GO:0008881">
    <property type="term" value="F:glutamate racemase activity"/>
    <property type="evidence" value="ECO:0007669"/>
    <property type="project" value="UniProtKB-UniRule"/>
</dbReference>
<dbReference type="GO" id="GO:0071555">
    <property type="term" value="P:cell wall organization"/>
    <property type="evidence" value="ECO:0007669"/>
    <property type="project" value="UniProtKB-KW"/>
</dbReference>
<dbReference type="GO" id="GO:0009252">
    <property type="term" value="P:peptidoglycan biosynthetic process"/>
    <property type="evidence" value="ECO:0007669"/>
    <property type="project" value="UniProtKB-UniRule"/>
</dbReference>
<dbReference type="GO" id="GO:0008360">
    <property type="term" value="P:regulation of cell shape"/>
    <property type="evidence" value="ECO:0007669"/>
    <property type="project" value="UniProtKB-KW"/>
</dbReference>
<dbReference type="FunFam" id="3.40.50.1860:FF:000002">
    <property type="entry name" value="Glutamate racemase"/>
    <property type="match status" value="1"/>
</dbReference>
<dbReference type="Gene3D" id="3.40.50.1860">
    <property type="match status" value="2"/>
</dbReference>
<dbReference type="HAMAP" id="MF_00258">
    <property type="entry name" value="Glu_racemase"/>
    <property type="match status" value="1"/>
</dbReference>
<dbReference type="InterPro" id="IPR015942">
    <property type="entry name" value="Asp/Glu/hydantoin_racemase"/>
</dbReference>
<dbReference type="InterPro" id="IPR001920">
    <property type="entry name" value="Asp/Glu_race"/>
</dbReference>
<dbReference type="InterPro" id="IPR018187">
    <property type="entry name" value="Asp/Glu_racemase_AS_1"/>
</dbReference>
<dbReference type="InterPro" id="IPR033134">
    <property type="entry name" value="Asp/Glu_racemase_AS_2"/>
</dbReference>
<dbReference type="InterPro" id="IPR004391">
    <property type="entry name" value="Glu_race"/>
</dbReference>
<dbReference type="NCBIfam" id="TIGR00067">
    <property type="entry name" value="glut_race"/>
    <property type="match status" value="1"/>
</dbReference>
<dbReference type="PANTHER" id="PTHR21198">
    <property type="entry name" value="GLUTAMATE RACEMASE"/>
    <property type="match status" value="1"/>
</dbReference>
<dbReference type="PANTHER" id="PTHR21198:SF2">
    <property type="entry name" value="GLUTAMATE RACEMASE"/>
    <property type="match status" value="1"/>
</dbReference>
<dbReference type="Pfam" id="PF01177">
    <property type="entry name" value="Asp_Glu_race"/>
    <property type="match status" value="1"/>
</dbReference>
<dbReference type="SUPFAM" id="SSF53681">
    <property type="entry name" value="Aspartate/glutamate racemase"/>
    <property type="match status" value="2"/>
</dbReference>
<dbReference type="PROSITE" id="PS00923">
    <property type="entry name" value="ASP_GLU_RACEMASE_1"/>
    <property type="match status" value="1"/>
</dbReference>
<dbReference type="PROSITE" id="PS00924">
    <property type="entry name" value="ASP_GLU_RACEMASE_2"/>
    <property type="match status" value="1"/>
</dbReference>
<sequence>MQNDPIGLMDSGVGGLTVLKEVQRLLPTENTVFLGDQARLPYGPRSVAEVTMFTKQIAQFLRQQARIKALVIACNTATAAALTTMQQTLPIPVIGVIAPGAQAAVQTTRNHRIGVIATAGTVKSDQYRRDILAAAPNSQIFSVACPEMVTLAEQNDLTTTHAQSVVAANLASLMDKKIDTLVMGCTHFPLLRSAIQHAVGSQVTLVDPGLATAEQTVAILKTRGLLNSATTRGTAQFFTTGETDQFDTLASQWLDQQPTPAKHVAIAQLTTPMEVN</sequence>
<evidence type="ECO:0000255" key="1">
    <source>
        <dbReference type="HAMAP-Rule" id="MF_00258"/>
    </source>
</evidence>
<gene>
    <name evidence="1" type="primary">murI</name>
</gene>
<proteinExistence type="inferred from homology"/>
<accession>P48797</accession>
<protein>
    <recommendedName>
        <fullName evidence="1">Glutamate racemase</fullName>
        <ecNumber evidence="1">5.1.1.3</ecNumber>
    </recommendedName>
</protein>